<keyword id="KW-0156">Chromatin regulator</keyword>
<keyword id="KW-0223">Dioxygenase</keyword>
<keyword id="KW-0408">Iron</keyword>
<keyword id="KW-0479">Metal-binding</keyword>
<keyword id="KW-0539">Nucleus</keyword>
<keyword id="KW-0560">Oxidoreductase</keyword>
<keyword id="KW-1185">Reference proteome</keyword>
<keyword id="KW-0804">Transcription</keyword>
<keyword id="KW-0805">Transcription regulation</keyword>
<keyword id="KW-0862">Zinc</keyword>
<keyword id="KW-0863">Zinc-finger</keyword>
<feature type="chain" id="PRO_0000226792" description="JmjC domain-containing histone demethylation protein 1">
    <location>
        <begin position="1"/>
        <end position="1418"/>
    </location>
</feature>
<feature type="domain" description="JmjC" evidence="4">
    <location>
        <begin position="588"/>
        <end position="746"/>
    </location>
</feature>
<feature type="zinc finger region" description="PHD-type" evidence="3">
    <location>
        <begin position="331"/>
        <end position="391"/>
    </location>
</feature>
<feature type="region of interest" description="Disordered" evidence="5">
    <location>
        <begin position="1"/>
        <end position="86"/>
    </location>
</feature>
<feature type="region of interest" description="Disordered" evidence="5">
    <location>
        <begin position="102"/>
        <end position="162"/>
    </location>
</feature>
<feature type="region of interest" description="Disordered" evidence="5">
    <location>
        <begin position="308"/>
        <end position="329"/>
    </location>
</feature>
<feature type="region of interest" description="Disordered" evidence="5">
    <location>
        <begin position="891"/>
        <end position="964"/>
    </location>
</feature>
<feature type="region of interest" description="Disordered" evidence="5">
    <location>
        <begin position="1090"/>
        <end position="1118"/>
    </location>
</feature>
<feature type="region of interest" description="Disordered" evidence="5">
    <location>
        <begin position="1130"/>
        <end position="1195"/>
    </location>
</feature>
<feature type="region of interest" description="Disordered" evidence="5">
    <location>
        <begin position="1250"/>
        <end position="1394"/>
    </location>
</feature>
<feature type="compositionally biased region" description="Basic and acidic residues" evidence="5">
    <location>
        <begin position="44"/>
        <end position="60"/>
    </location>
</feature>
<feature type="compositionally biased region" description="Polar residues" evidence="5">
    <location>
        <begin position="61"/>
        <end position="71"/>
    </location>
</feature>
<feature type="compositionally biased region" description="Basic and acidic residues" evidence="5">
    <location>
        <begin position="127"/>
        <end position="139"/>
    </location>
</feature>
<feature type="compositionally biased region" description="Polar residues" evidence="5">
    <location>
        <begin position="143"/>
        <end position="162"/>
    </location>
</feature>
<feature type="compositionally biased region" description="Basic and acidic residues" evidence="5">
    <location>
        <begin position="308"/>
        <end position="321"/>
    </location>
</feature>
<feature type="compositionally biased region" description="Basic and acidic residues" evidence="5">
    <location>
        <begin position="907"/>
        <end position="925"/>
    </location>
</feature>
<feature type="compositionally biased region" description="Basic and acidic residues" evidence="5">
    <location>
        <begin position="1130"/>
        <end position="1143"/>
    </location>
</feature>
<feature type="compositionally biased region" description="Basic and acidic residues" evidence="5">
    <location>
        <begin position="1186"/>
        <end position="1195"/>
    </location>
</feature>
<feature type="compositionally biased region" description="Polar residues" evidence="5">
    <location>
        <begin position="1250"/>
        <end position="1263"/>
    </location>
</feature>
<feature type="compositionally biased region" description="Low complexity" evidence="5">
    <location>
        <begin position="1341"/>
        <end position="1352"/>
    </location>
</feature>
<feature type="binding site" evidence="1">
    <location>
        <position position="639"/>
    </location>
    <ligand>
        <name>substrate</name>
    </ligand>
</feature>
<feature type="binding site" evidence="4">
    <location>
        <position position="642"/>
    </location>
    <ligand>
        <name>Fe cation</name>
        <dbReference type="ChEBI" id="CHEBI:24875"/>
        <note>catalytic</note>
    </ligand>
</feature>
<feature type="binding site" evidence="4">
    <location>
        <position position="644"/>
    </location>
    <ligand>
        <name>Fe cation</name>
        <dbReference type="ChEBI" id="CHEBI:24875"/>
        <note>catalytic</note>
    </ligand>
</feature>
<feature type="binding site" evidence="1">
    <location>
        <position position="659"/>
    </location>
    <ligand>
        <name>substrate</name>
    </ligand>
</feature>
<feature type="binding site" evidence="4">
    <location>
        <position position="714"/>
    </location>
    <ligand>
        <name>Fe cation</name>
        <dbReference type="ChEBI" id="CHEBI:24875"/>
        <note>catalytic</note>
    </ligand>
</feature>
<organism>
    <name type="scientific">Aspergillus fumigatus (strain ATCC MYA-4609 / CBS 101355 / FGSC A1100 / Af293)</name>
    <name type="common">Neosartorya fumigata</name>
    <dbReference type="NCBI Taxonomy" id="330879"/>
    <lineage>
        <taxon>Eukaryota</taxon>
        <taxon>Fungi</taxon>
        <taxon>Dikarya</taxon>
        <taxon>Ascomycota</taxon>
        <taxon>Pezizomycotina</taxon>
        <taxon>Eurotiomycetes</taxon>
        <taxon>Eurotiomycetidae</taxon>
        <taxon>Eurotiales</taxon>
        <taxon>Aspergillaceae</taxon>
        <taxon>Aspergillus</taxon>
        <taxon>Aspergillus subgen. Fumigati</taxon>
    </lineage>
</organism>
<proteinExistence type="inferred from homology"/>
<gene>
    <name type="primary">jhd1</name>
    <name type="ORF">AFUA_2G05970</name>
</gene>
<comment type="function">
    <text evidence="2">Histone demethylase that specifically demethylates 'Lys-36' of histone H3, thereby playing a central role in histone code.</text>
</comment>
<comment type="catalytic activity">
    <reaction evidence="2">
        <text>N(6),N(6)-dimethyl-L-lysyl(36)-[histone H3] + 2 2-oxoglutarate + 2 O2 = L-lysyl(36)-[histone H3] + 2 formaldehyde + 2 succinate + 2 CO2</text>
        <dbReference type="Rhea" id="RHEA:42032"/>
        <dbReference type="Rhea" id="RHEA-COMP:9785"/>
        <dbReference type="Rhea" id="RHEA-COMP:9787"/>
        <dbReference type="ChEBI" id="CHEBI:15379"/>
        <dbReference type="ChEBI" id="CHEBI:16526"/>
        <dbReference type="ChEBI" id="CHEBI:16810"/>
        <dbReference type="ChEBI" id="CHEBI:16842"/>
        <dbReference type="ChEBI" id="CHEBI:29969"/>
        <dbReference type="ChEBI" id="CHEBI:30031"/>
        <dbReference type="ChEBI" id="CHEBI:61976"/>
        <dbReference type="EC" id="1.14.11.27"/>
    </reaction>
</comment>
<comment type="cofactor">
    <cofactor evidence="1">
        <name>Fe(2+)</name>
        <dbReference type="ChEBI" id="CHEBI:29033"/>
    </cofactor>
    <text evidence="1">Binds 1 Fe(2+) ion per subunit.</text>
</comment>
<comment type="subcellular location">
    <subcellularLocation>
        <location evidence="1">Nucleus</location>
    </subcellularLocation>
</comment>
<comment type="domain">
    <text evidence="1">The JmjC domain mediates the demethylation activity.</text>
</comment>
<comment type="similarity">
    <text evidence="6">Belongs to the JHDM1 histone demethylase family.</text>
</comment>
<protein>
    <recommendedName>
        <fullName>JmjC domain-containing histone demethylation protein 1</fullName>
        <ecNumber evidence="2">1.14.11.27</ecNumber>
    </recommendedName>
    <alternativeName>
        <fullName>[Histone-H3]-lysine-36 demethylase 1</fullName>
    </alternativeName>
</protein>
<name>JHD1_ASPFU</name>
<dbReference type="EC" id="1.14.11.27" evidence="2"/>
<dbReference type="EMBL" id="AAHF01000008">
    <property type="protein sequence ID" value="EAL87688.1"/>
    <property type="molecule type" value="Genomic_DNA"/>
</dbReference>
<dbReference type="RefSeq" id="XP_749726.1">
    <property type="nucleotide sequence ID" value="XM_744633.1"/>
</dbReference>
<dbReference type="SMR" id="Q4WHB7"/>
<dbReference type="STRING" id="330879.Q4WHB7"/>
<dbReference type="EnsemblFungi" id="EAL87688">
    <property type="protein sequence ID" value="EAL87688"/>
    <property type="gene ID" value="AFUA_2G05970"/>
</dbReference>
<dbReference type="GeneID" id="3506876"/>
<dbReference type="KEGG" id="afm:AFUA_2G05970"/>
<dbReference type="VEuPathDB" id="FungiDB:Afu2g05970"/>
<dbReference type="eggNOG" id="KOG1633">
    <property type="taxonomic scope" value="Eukaryota"/>
</dbReference>
<dbReference type="HOGENOM" id="CLU_002979_0_1_1"/>
<dbReference type="InParanoid" id="Q4WHB7"/>
<dbReference type="OMA" id="KFGIWVA"/>
<dbReference type="OrthoDB" id="5876800at2759"/>
<dbReference type="Proteomes" id="UP000002530">
    <property type="component" value="Chromosome 2"/>
</dbReference>
<dbReference type="GO" id="GO:0005634">
    <property type="term" value="C:nucleus"/>
    <property type="evidence" value="ECO:0007669"/>
    <property type="project" value="UniProtKB-SubCell"/>
</dbReference>
<dbReference type="GO" id="GO:0000981">
    <property type="term" value="F:DNA-binding transcription factor activity, RNA polymerase II-specific"/>
    <property type="evidence" value="ECO:0007669"/>
    <property type="project" value="InterPro"/>
</dbReference>
<dbReference type="GO" id="GO:0032452">
    <property type="term" value="F:histone demethylase activity"/>
    <property type="evidence" value="ECO:0000318"/>
    <property type="project" value="GO_Central"/>
</dbReference>
<dbReference type="GO" id="GO:0140680">
    <property type="term" value="F:histone H3K36me/H3K36me2 demethylase activity"/>
    <property type="evidence" value="ECO:0007669"/>
    <property type="project" value="UniProtKB-EC"/>
</dbReference>
<dbReference type="GO" id="GO:0003712">
    <property type="term" value="F:transcription coregulator activity"/>
    <property type="evidence" value="ECO:0000318"/>
    <property type="project" value="GO_Central"/>
</dbReference>
<dbReference type="GO" id="GO:0008270">
    <property type="term" value="F:zinc ion binding"/>
    <property type="evidence" value="ECO:0007669"/>
    <property type="project" value="UniProtKB-KW"/>
</dbReference>
<dbReference type="GO" id="GO:0006338">
    <property type="term" value="P:chromatin remodeling"/>
    <property type="evidence" value="ECO:0000318"/>
    <property type="project" value="GO_Central"/>
</dbReference>
<dbReference type="GO" id="GO:0006357">
    <property type="term" value="P:regulation of transcription by RNA polymerase II"/>
    <property type="evidence" value="ECO:0000318"/>
    <property type="project" value="GO_Central"/>
</dbReference>
<dbReference type="CDD" id="cd00067">
    <property type="entry name" value="GAL4"/>
    <property type="match status" value="1"/>
</dbReference>
<dbReference type="CDD" id="cd15517">
    <property type="entry name" value="PHD_TCF19_like"/>
    <property type="match status" value="1"/>
</dbReference>
<dbReference type="Gene3D" id="2.60.120.650">
    <property type="entry name" value="Cupin"/>
    <property type="match status" value="1"/>
</dbReference>
<dbReference type="Gene3D" id="3.30.40.10">
    <property type="entry name" value="Zinc/RING finger domain, C3HC4 (zinc finger)"/>
    <property type="match status" value="1"/>
</dbReference>
<dbReference type="InterPro" id="IPR041070">
    <property type="entry name" value="JHD"/>
</dbReference>
<dbReference type="InterPro" id="IPR050690">
    <property type="entry name" value="JHDM1_Histone_Demethylase"/>
</dbReference>
<dbReference type="InterPro" id="IPR003347">
    <property type="entry name" value="JmjC_dom"/>
</dbReference>
<dbReference type="InterPro" id="IPR019786">
    <property type="entry name" value="Zinc_finger_PHD-type_CS"/>
</dbReference>
<dbReference type="InterPro" id="IPR001138">
    <property type="entry name" value="Zn2Cys6_DnaBD"/>
</dbReference>
<dbReference type="InterPro" id="IPR011011">
    <property type="entry name" value="Znf_FYVE_PHD"/>
</dbReference>
<dbReference type="InterPro" id="IPR001965">
    <property type="entry name" value="Znf_PHD"/>
</dbReference>
<dbReference type="InterPro" id="IPR019787">
    <property type="entry name" value="Znf_PHD-finger"/>
</dbReference>
<dbReference type="InterPro" id="IPR013083">
    <property type="entry name" value="Znf_RING/FYVE/PHD"/>
</dbReference>
<dbReference type="PANTHER" id="PTHR23123">
    <property type="entry name" value="PHD/F-BOX CONTAINING PROTEIN"/>
    <property type="match status" value="1"/>
</dbReference>
<dbReference type="Pfam" id="PF17811">
    <property type="entry name" value="JHD"/>
    <property type="match status" value="1"/>
</dbReference>
<dbReference type="Pfam" id="PF02373">
    <property type="entry name" value="JmjC"/>
    <property type="match status" value="1"/>
</dbReference>
<dbReference type="Pfam" id="PF00628">
    <property type="entry name" value="PHD"/>
    <property type="match status" value="1"/>
</dbReference>
<dbReference type="SMART" id="SM00558">
    <property type="entry name" value="JmjC"/>
    <property type="match status" value="1"/>
</dbReference>
<dbReference type="SMART" id="SM00249">
    <property type="entry name" value="PHD"/>
    <property type="match status" value="1"/>
</dbReference>
<dbReference type="SUPFAM" id="SSF51197">
    <property type="entry name" value="Clavaminate synthase-like"/>
    <property type="match status" value="1"/>
</dbReference>
<dbReference type="SUPFAM" id="SSF57903">
    <property type="entry name" value="FYVE/PHD zinc finger"/>
    <property type="match status" value="1"/>
</dbReference>
<dbReference type="PROSITE" id="PS51184">
    <property type="entry name" value="JMJC"/>
    <property type="match status" value="1"/>
</dbReference>
<dbReference type="PROSITE" id="PS01359">
    <property type="entry name" value="ZF_PHD_1"/>
    <property type="match status" value="1"/>
</dbReference>
<dbReference type="PROSITE" id="PS50016">
    <property type="entry name" value="ZF_PHD_2"/>
    <property type="match status" value="1"/>
</dbReference>
<sequence>MIGATSFLNHSGPRPPRYRTPSPPRRAVEPISPFTTTTDFRASWIDRGDSQAASYDRDRVTSNNDVYSSTNRGSHGRTSHGRSSSTIDTLATIALATSPTFAPLSYRPPSQDPTPAMPLFPSQSIESTERPAKRPRSEKSPSPLHQPQTTVAPDANPSSTFDSMKTDAELLLNFARPSNFQPAAFYPSKRVSIDESYHPHYGEEPKSHFRAGLGSTYILPDGEKSAYHTSANTAFPASRMRSQSDGSAFISRPVIQGVRPNTSSSTLPPIVWQEEEGNAKTGPGPPSTKFPGAETRYENSVFTGIDTGADRASLDVPPRGDDDTESDENNQANCAACNLVRIPVDSEEQGDVTWISCDGCKQWFHIVCAGFKNDREIRTVDKFICRRCRPIHGQTTFVRKSSRARTAIDYAGLNQGLVKAASDSLEHHYIEPIREGKIRFLPDNFPRMRPELVTAEYFERGSGMTEPIVIPAHLNTRDSIPIVDPEFDSLVQEATSQEMFDELLEHLPEEGKDFETVIDCGQDQLDMVVPQGLTVRAVAELYGPEERVEVIDVKSQQGEDKRWNMQKWADYYESTGSKVVRNVISLEVSQSKLGKLIRRPKIVRDLDLQDAVWPEELKAIGDYPKVQFYCLMSVADCYTDFHIDFGGSSVYYHILKGKKTFFFIPPKDKHLKKYEDWCNSPAQDSTFLGDQTKECYRVDLSEGDTMLIPSGWIHAVWTPTNSLVIGGNFLTRLNYGMQIKVAKIEKDTKVPRKFRYPFFQRIQWYTALKYLEDDPIPQSVLNAFAEDENYRFHRAYPIYYEFGERENKAPAGDPYHNSRFYSQAELEGLPDLAKYLLRTALIASGYMVEGVTMDARNAVKRSIPKGQGDPIDTVRKFGIWVAWKRGNEKAPQWTRPGVVESNAKLSLTEKKPAGRPSRRSERNAEGQRMYAERQAVQRPLEQPPDLTNGLSSEESSSAPSTVEIPQSTVISTLPGTETKELKEEIAQKPRSIHRSSGLGPKRVACDACRKRRIRCRHKDEHNDTISAKQTTFGTFPAGVQSSLAHDAASALNSLAAIASEAGFQDAANGHGLERLEGSGNYSTAILSTPNAATSKVHDGSPEGLNTGKKGRSKACDDCRKSKRRCIHDEYGRIDPIKAQERSKPRATASAKRPRPPQEEDAAFTLNKRPKQESTSPVARPASLFRAEGDMSHTQRPVDLEASSYFGTAHDHNGIAQTKLTSAVGQTSYASPPAFQSDTVVMEVAGQGVSKPTASLVSPPTSQADETDVPPEQDAEKDNHVVYYTPTTSSRHSSRQPRHVDRYVPESQPAKAVKTTHTPSKRRASCSGPTTARRVTPGAQGSSKKPASRPSSSHAKKGVSPVTEKKFDRMTTTSTSPGHKGAKRERTAIADDEPDAESLRLIRELQEQEFGLRKRTTRV</sequence>
<reference key="1">
    <citation type="journal article" date="2005" name="Nature">
        <title>Genomic sequence of the pathogenic and allergenic filamentous fungus Aspergillus fumigatus.</title>
        <authorList>
            <person name="Nierman W.C."/>
            <person name="Pain A."/>
            <person name="Anderson M.J."/>
            <person name="Wortman J.R."/>
            <person name="Kim H.S."/>
            <person name="Arroyo J."/>
            <person name="Berriman M."/>
            <person name="Abe K."/>
            <person name="Archer D.B."/>
            <person name="Bermejo C."/>
            <person name="Bennett J.W."/>
            <person name="Bowyer P."/>
            <person name="Chen D."/>
            <person name="Collins M."/>
            <person name="Coulsen R."/>
            <person name="Davies R."/>
            <person name="Dyer P.S."/>
            <person name="Farman M.L."/>
            <person name="Fedorova N."/>
            <person name="Fedorova N.D."/>
            <person name="Feldblyum T.V."/>
            <person name="Fischer R."/>
            <person name="Fosker N."/>
            <person name="Fraser A."/>
            <person name="Garcia J.L."/>
            <person name="Garcia M.J."/>
            <person name="Goble A."/>
            <person name="Goldman G.H."/>
            <person name="Gomi K."/>
            <person name="Griffith-Jones S."/>
            <person name="Gwilliam R."/>
            <person name="Haas B.J."/>
            <person name="Haas H."/>
            <person name="Harris D.E."/>
            <person name="Horiuchi H."/>
            <person name="Huang J."/>
            <person name="Humphray S."/>
            <person name="Jimenez J."/>
            <person name="Keller N."/>
            <person name="Khouri H."/>
            <person name="Kitamoto K."/>
            <person name="Kobayashi T."/>
            <person name="Konzack S."/>
            <person name="Kulkarni R."/>
            <person name="Kumagai T."/>
            <person name="Lafton A."/>
            <person name="Latge J.-P."/>
            <person name="Li W."/>
            <person name="Lord A."/>
            <person name="Lu C."/>
            <person name="Majoros W.H."/>
            <person name="May G.S."/>
            <person name="Miller B.L."/>
            <person name="Mohamoud Y."/>
            <person name="Molina M."/>
            <person name="Monod M."/>
            <person name="Mouyna I."/>
            <person name="Mulligan S."/>
            <person name="Murphy L.D."/>
            <person name="O'Neil S."/>
            <person name="Paulsen I."/>
            <person name="Penalva M.A."/>
            <person name="Pertea M."/>
            <person name="Price C."/>
            <person name="Pritchard B.L."/>
            <person name="Quail M.A."/>
            <person name="Rabbinowitsch E."/>
            <person name="Rawlins N."/>
            <person name="Rajandream M.A."/>
            <person name="Reichard U."/>
            <person name="Renauld H."/>
            <person name="Robson G.D."/>
            <person name="Rodriguez de Cordoba S."/>
            <person name="Rodriguez-Pena J.M."/>
            <person name="Ronning C.M."/>
            <person name="Rutter S."/>
            <person name="Salzberg S.L."/>
            <person name="Sanchez M."/>
            <person name="Sanchez-Ferrero J.C."/>
            <person name="Saunders D."/>
            <person name="Seeger K."/>
            <person name="Squares R."/>
            <person name="Squares S."/>
            <person name="Takeuchi M."/>
            <person name="Tekaia F."/>
            <person name="Turner G."/>
            <person name="Vazquez de Aldana C.R."/>
            <person name="Weidman J."/>
            <person name="White O."/>
            <person name="Woodward J.R."/>
            <person name="Yu J.-H."/>
            <person name="Fraser C.M."/>
            <person name="Galagan J.E."/>
            <person name="Asai K."/>
            <person name="Machida M."/>
            <person name="Hall N."/>
            <person name="Barrell B.G."/>
            <person name="Denning D.W."/>
        </authorList>
    </citation>
    <scope>NUCLEOTIDE SEQUENCE [LARGE SCALE GENOMIC DNA]</scope>
    <source>
        <strain>ATCC MYA-4609 / CBS 101355 / FGSC A1100 / Af293</strain>
    </source>
</reference>
<evidence type="ECO:0000250" key="1"/>
<evidence type="ECO:0000250" key="2">
    <source>
        <dbReference type="UniProtKB" id="P40034"/>
    </source>
</evidence>
<evidence type="ECO:0000255" key="3">
    <source>
        <dbReference type="PROSITE-ProRule" id="PRU00146"/>
    </source>
</evidence>
<evidence type="ECO:0000255" key="4">
    <source>
        <dbReference type="PROSITE-ProRule" id="PRU00538"/>
    </source>
</evidence>
<evidence type="ECO:0000256" key="5">
    <source>
        <dbReference type="SAM" id="MobiDB-lite"/>
    </source>
</evidence>
<evidence type="ECO:0000305" key="6"/>
<accession>Q4WHB7</accession>